<gene>
    <name type="ordered locus">RPB_2181</name>
</gene>
<comment type="function">
    <text evidence="1">Could be involved in insertion of integral membrane proteins into the membrane.</text>
</comment>
<comment type="subcellular location">
    <subcellularLocation>
        <location evidence="1">Cell inner membrane</location>
        <topology evidence="1">Peripheral membrane protein</topology>
        <orientation evidence="1">Cytoplasmic side</orientation>
    </subcellularLocation>
</comment>
<comment type="similarity">
    <text evidence="1">Belongs to the UPF0161 family.</text>
</comment>
<evidence type="ECO:0000255" key="1">
    <source>
        <dbReference type="HAMAP-Rule" id="MF_00386"/>
    </source>
</evidence>
<keyword id="KW-0997">Cell inner membrane</keyword>
<keyword id="KW-1003">Cell membrane</keyword>
<keyword id="KW-0472">Membrane</keyword>
<keyword id="KW-1185">Reference proteome</keyword>
<proteinExistence type="inferred from homology"/>
<sequence length="121" mass="13526">MHSRLPTHAADLLQALSRLPRNAGRGLIWVYRHSFSALVGSNCRHLPTCSQYGDEAIGRFGLWAGGWMTLARLIRCNPYGTSGIDNVPETPPPGARWYLPWRYARWRGVNGPDCGCGHHDE</sequence>
<accession>Q2IY23</accession>
<organism>
    <name type="scientific">Rhodopseudomonas palustris (strain HaA2)</name>
    <dbReference type="NCBI Taxonomy" id="316058"/>
    <lineage>
        <taxon>Bacteria</taxon>
        <taxon>Pseudomonadati</taxon>
        <taxon>Pseudomonadota</taxon>
        <taxon>Alphaproteobacteria</taxon>
        <taxon>Hyphomicrobiales</taxon>
        <taxon>Nitrobacteraceae</taxon>
        <taxon>Rhodopseudomonas</taxon>
    </lineage>
</organism>
<feature type="chain" id="PRO_0000253156" description="Putative membrane protein insertion efficiency factor">
    <location>
        <begin position="1"/>
        <end position="121"/>
    </location>
</feature>
<name>YIDD_RHOP2</name>
<reference key="1">
    <citation type="submission" date="2006-01" db="EMBL/GenBank/DDBJ databases">
        <title>Complete sequence of Rhodopseudomonas palustris HaA2.</title>
        <authorList>
            <consortium name="US DOE Joint Genome Institute"/>
            <person name="Copeland A."/>
            <person name="Lucas S."/>
            <person name="Lapidus A."/>
            <person name="Barry K."/>
            <person name="Detter J.C."/>
            <person name="Glavina T."/>
            <person name="Hammon N."/>
            <person name="Israni S."/>
            <person name="Pitluck S."/>
            <person name="Chain P."/>
            <person name="Malfatti S."/>
            <person name="Shin M."/>
            <person name="Vergez L."/>
            <person name="Schmutz J."/>
            <person name="Larimer F."/>
            <person name="Land M."/>
            <person name="Hauser L."/>
            <person name="Pelletier D.A."/>
            <person name="Kyrpides N."/>
            <person name="Anderson I."/>
            <person name="Oda Y."/>
            <person name="Harwood C.S."/>
            <person name="Richardson P."/>
        </authorList>
    </citation>
    <scope>NUCLEOTIDE SEQUENCE [LARGE SCALE GENOMIC DNA]</scope>
    <source>
        <strain>HaA2</strain>
    </source>
</reference>
<dbReference type="EMBL" id="CP000250">
    <property type="protein sequence ID" value="ABD06887.1"/>
    <property type="molecule type" value="Genomic_DNA"/>
</dbReference>
<dbReference type="RefSeq" id="WP_011441074.1">
    <property type="nucleotide sequence ID" value="NC_007778.1"/>
</dbReference>
<dbReference type="STRING" id="316058.RPB_2181"/>
<dbReference type="KEGG" id="rpb:RPB_2181"/>
<dbReference type="eggNOG" id="COG0759">
    <property type="taxonomic scope" value="Bacteria"/>
</dbReference>
<dbReference type="HOGENOM" id="CLU_144811_0_0_5"/>
<dbReference type="OrthoDB" id="9801753at2"/>
<dbReference type="Proteomes" id="UP000008809">
    <property type="component" value="Chromosome"/>
</dbReference>
<dbReference type="GO" id="GO:0005886">
    <property type="term" value="C:plasma membrane"/>
    <property type="evidence" value="ECO:0007669"/>
    <property type="project" value="UniProtKB-SubCell"/>
</dbReference>
<dbReference type="HAMAP" id="MF_00386">
    <property type="entry name" value="UPF0161_YidD"/>
    <property type="match status" value="1"/>
</dbReference>
<dbReference type="InterPro" id="IPR002696">
    <property type="entry name" value="Membr_insert_effic_factor_YidD"/>
</dbReference>
<dbReference type="NCBIfam" id="TIGR00278">
    <property type="entry name" value="membrane protein insertion efficiency factor YidD"/>
    <property type="match status" value="1"/>
</dbReference>
<dbReference type="PANTHER" id="PTHR33383">
    <property type="entry name" value="MEMBRANE PROTEIN INSERTION EFFICIENCY FACTOR-RELATED"/>
    <property type="match status" value="1"/>
</dbReference>
<dbReference type="PANTHER" id="PTHR33383:SF1">
    <property type="entry name" value="MEMBRANE PROTEIN INSERTION EFFICIENCY FACTOR-RELATED"/>
    <property type="match status" value="1"/>
</dbReference>
<dbReference type="Pfam" id="PF01809">
    <property type="entry name" value="YidD"/>
    <property type="match status" value="1"/>
</dbReference>
<dbReference type="SMART" id="SM01234">
    <property type="entry name" value="Haemolytic"/>
    <property type="match status" value="1"/>
</dbReference>
<protein>
    <recommendedName>
        <fullName evidence="1">Putative membrane protein insertion efficiency factor</fullName>
    </recommendedName>
</protein>